<accession>Q9X895</accession>
<sequence>MPIVAQSTETTDWVSRFADEVIAESERRAPGKPGVVVASGLSPSGPIHLGNLREVMTPHLVADEVRRRGHEVRHLISWDDYDRYRKVPAGVPGVDESWAEHIGKPLTSVPAPKGSPHPNWAEHFKAAMVDSLAEMGVEFDGISQTAQYTSGVYREQILHAMKHRRDIDAILDQYRTKKAPAKKSQKPLDEAELEAAEGSGAAAEDDGSSGSAGYFPYKPYCGNCEKDLTTVTAYDDDSTELTYACTACGFSETVRLSEFNRGKLVWKVDWPMRWAYEGVVFEPSGVDHSSPGSSFQVGGQIVGIFGGEQPIGPMYAFVGISGMAKMSSSKGGVPTPADALKIMEPQLLRWLYARRRPNQSFKIAFDQEIQRLYDEWDRLDAKVADGSALPADAAAHARAVGTAAGELPRTPRPLPYRTLASVADITAGHEDQALRILGELDPANPIASLDEARPRYDKAEAWINTHVPADQRTIVRQEPDAELLKSLDEPSRQSLRLLLDGLADHWSLDGLTHHVYGVPKVQAGFPADATPKELPPEIKTAQRTFFALLYHLLVGRDTGPRLPTLLLAVGQDRVRTLLGE</sequence>
<evidence type="ECO:0000250" key="1"/>
<evidence type="ECO:0000256" key="2">
    <source>
        <dbReference type="SAM" id="MobiDB-lite"/>
    </source>
</evidence>
<evidence type="ECO:0000305" key="3"/>
<keyword id="KW-0030">Aminoacyl-tRNA synthetase</keyword>
<keyword id="KW-0067">ATP-binding</keyword>
<keyword id="KW-0963">Cytoplasm</keyword>
<keyword id="KW-0436">Ligase</keyword>
<keyword id="KW-0547">Nucleotide-binding</keyword>
<keyword id="KW-0648">Protein biosynthesis</keyword>
<keyword id="KW-1185">Reference proteome</keyword>
<comment type="catalytic activity">
    <reaction>
        <text>tRNA(Lys) + L-lysine + ATP = L-lysyl-tRNA(Lys) + AMP + diphosphate</text>
        <dbReference type="Rhea" id="RHEA:20792"/>
        <dbReference type="Rhea" id="RHEA-COMP:9696"/>
        <dbReference type="Rhea" id="RHEA-COMP:9697"/>
        <dbReference type="ChEBI" id="CHEBI:30616"/>
        <dbReference type="ChEBI" id="CHEBI:32551"/>
        <dbReference type="ChEBI" id="CHEBI:33019"/>
        <dbReference type="ChEBI" id="CHEBI:78442"/>
        <dbReference type="ChEBI" id="CHEBI:78529"/>
        <dbReference type="ChEBI" id="CHEBI:456215"/>
        <dbReference type="EC" id="6.1.1.6"/>
    </reaction>
</comment>
<comment type="subcellular location">
    <subcellularLocation>
        <location evidence="1">Cytoplasm</location>
    </subcellularLocation>
</comment>
<comment type="similarity">
    <text evidence="3">Belongs to the class-I aminoacyl-tRNA synthetase family.</text>
</comment>
<name>SYK_STRCO</name>
<proteinExistence type="inferred from homology"/>
<protein>
    <recommendedName>
        <fullName>Lysine--tRNA ligase</fullName>
        <ecNumber>6.1.1.6</ecNumber>
    </recommendedName>
    <alternativeName>
        <fullName>Lysyl-tRNA synthetase</fullName>
        <shortName>LysRS</shortName>
    </alternativeName>
</protein>
<gene>
    <name type="primary">lysS</name>
    <name type="ordered locus">SCO3303</name>
    <name type="ORF">SCE15.20c</name>
    <name type="ORF">SCE68.01c</name>
</gene>
<feature type="chain" id="PRO_0000152744" description="Lysine--tRNA ligase">
    <location>
        <begin position="1"/>
        <end position="580"/>
    </location>
</feature>
<feature type="region of interest" description="Disordered" evidence="2">
    <location>
        <begin position="178"/>
        <end position="209"/>
    </location>
</feature>
<feature type="short sequence motif" description="'HIGH' region">
    <location>
        <begin position="43"/>
        <end position="51"/>
    </location>
</feature>
<feature type="short sequence motif" description="'KMSKS' region">
    <location>
        <begin position="325"/>
        <end position="329"/>
    </location>
</feature>
<feature type="compositionally biased region" description="Low complexity" evidence="2">
    <location>
        <begin position="196"/>
        <end position="209"/>
    </location>
</feature>
<reference key="1">
    <citation type="journal article" date="2002" name="Nature">
        <title>Complete genome sequence of the model actinomycete Streptomyces coelicolor A3(2).</title>
        <authorList>
            <person name="Bentley S.D."/>
            <person name="Chater K.F."/>
            <person name="Cerdeno-Tarraga A.-M."/>
            <person name="Challis G.L."/>
            <person name="Thomson N.R."/>
            <person name="James K.D."/>
            <person name="Harris D.E."/>
            <person name="Quail M.A."/>
            <person name="Kieser H."/>
            <person name="Harper D."/>
            <person name="Bateman A."/>
            <person name="Brown S."/>
            <person name="Chandra G."/>
            <person name="Chen C.W."/>
            <person name="Collins M."/>
            <person name="Cronin A."/>
            <person name="Fraser A."/>
            <person name="Goble A."/>
            <person name="Hidalgo J."/>
            <person name="Hornsby T."/>
            <person name="Howarth S."/>
            <person name="Huang C.-H."/>
            <person name="Kieser T."/>
            <person name="Larke L."/>
            <person name="Murphy L.D."/>
            <person name="Oliver K."/>
            <person name="O'Neil S."/>
            <person name="Rabbinowitsch E."/>
            <person name="Rajandream M.A."/>
            <person name="Rutherford K.M."/>
            <person name="Rutter S."/>
            <person name="Seeger K."/>
            <person name="Saunders D."/>
            <person name="Sharp S."/>
            <person name="Squares R."/>
            <person name="Squares S."/>
            <person name="Taylor K."/>
            <person name="Warren T."/>
            <person name="Wietzorrek A."/>
            <person name="Woodward J.R."/>
            <person name="Barrell B.G."/>
            <person name="Parkhill J."/>
            <person name="Hopwood D.A."/>
        </authorList>
    </citation>
    <scope>NUCLEOTIDE SEQUENCE [LARGE SCALE GENOMIC DNA]</scope>
    <source>
        <strain>ATCC BAA-471 / A3(2) / M145</strain>
    </source>
</reference>
<organism>
    <name type="scientific">Streptomyces coelicolor (strain ATCC BAA-471 / A3(2) / M145)</name>
    <dbReference type="NCBI Taxonomy" id="100226"/>
    <lineage>
        <taxon>Bacteria</taxon>
        <taxon>Bacillati</taxon>
        <taxon>Actinomycetota</taxon>
        <taxon>Actinomycetes</taxon>
        <taxon>Kitasatosporales</taxon>
        <taxon>Streptomycetaceae</taxon>
        <taxon>Streptomyces</taxon>
        <taxon>Streptomyces albidoflavus group</taxon>
    </lineage>
</organism>
<dbReference type="EC" id="6.1.1.6"/>
<dbReference type="EMBL" id="AL939116">
    <property type="protein sequence ID" value="CAD55312.1"/>
    <property type="molecule type" value="Genomic_DNA"/>
</dbReference>
<dbReference type="RefSeq" id="NP_733599.1">
    <property type="nucleotide sequence ID" value="NC_003888.3"/>
</dbReference>
<dbReference type="RefSeq" id="WP_003975532.1">
    <property type="nucleotide sequence ID" value="NZ_VNID01000025.1"/>
</dbReference>
<dbReference type="SMR" id="Q9X895"/>
<dbReference type="STRING" id="100226.gene:17760922"/>
<dbReference type="PaxDb" id="100226-SCO3303"/>
<dbReference type="GeneID" id="91385658"/>
<dbReference type="KEGG" id="sco:SCO3303"/>
<dbReference type="PATRIC" id="fig|100226.15.peg.3364"/>
<dbReference type="eggNOG" id="COG1384">
    <property type="taxonomic scope" value="Bacteria"/>
</dbReference>
<dbReference type="HOGENOM" id="CLU_025562_0_0_11"/>
<dbReference type="InParanoid" id="Q9X895"/>
<dbReference type="OrthoDB" id="9803151at2"/>
<dbReference type="PhylomeDB" id="Q9X895"/>
<dbReference type="Proteomes" id="UP000001973">
    <property type="component" value="Chromosome"/>
</dbReference>
<dbReference type="GO" id="GO:0005737">
    <property type="term" value="C:cytoplasm"/>
    <property type="evidence" value="ECO:0007669"/>
    <property type="project" value="UniProtKB-SubCell"/>
</dbReference>
<dbReference type="GO" id="GO:0005524">
    <property type="term" value="F:ATP binding"/>
    <property type="evidence" value="ECO:0007669"/>
    <property type="project" value="UniProtKB-UniRule"/>
</dbReference>
<dbReference type="GO" id="GO:0004824">
    <property type="term" value="F:lysine-tRNA ligase activity"/>
    <property type="evidence" value="ECO:0007669"/>
    <property type="project" value="UniProtKB-UniRule"/>
</dbReference>
<dbReference type="GO" id="GO:0000049">
    <property type="term" value="F:tRNA binding"/>
    <property type="evidence" value="ECO:0007669"/>
    <property type="project" value="InterPro"/>
</dbReference>
<dbReference type="GO" id="GO:0006430">
    <property type="term" value="P:lysyl-tRNA aminoacylation"/>
    <property type="evidence" value="ECO:0007669"/>
    <property type="project" value="UniProtKB-UniRule"/>
</dbReference>
<dbReference type="CDD" id="cd00674">
    <property type="entry name" value="LysRS_core_class_I"/>
    <property type="match status" value="1"/>
</dbReference>
<dbReference type="Gene3D" id="1.10.10.350">
    <property type="match status" value="1"/>
</dbReference>
<dbReference type="Gene3D" id="3.40.50.620">
    <property type="entry name" value="HUPs"/>
    <property type="match status" value="2"/>
</dbReference>
<dbReference type="Gene3D" id="6.10.20.10">
    <property type="entry name" value="Lysine tRNA ligase, stem contact fold domain"/>
    <property type="match status" value="1"/>
</dbReference>
<dbReference type="HAMAP" id="MF_00177">
    <property type="entry name" value="Lys_tRNA_synth_class1"/>
    <property type="match status" value="1"/>
</dbReference>
<dbReference type="InterPro" id="IPR020751">
    <property type="entry name" value="aa-tRNA-synth_I_codon-bd_sub2"/>
</dbReference>
<dbReference type="InterPro" id="IPR001412">
    <property type="entry name" value="aa-tRNA-synth_I_CS"/>
</dbReference>
<dbReference type="InterPro" id="IPR008925">
    <property type="entry name" value="aa_tRNA-synth_I_cd-bd_sf"/>
</dbReference>
<dbReference type="InterPro" id="IPR002904">
    <property type="entry name" value="Lys-tRNA-ligase"/>
</dbReference>
<dbReference type="InterPro" id="IPR042078">
    <property type="entry name" value="Lys-tRNA-ligase_SC_fold"/>
</dbReference>
<dbReference type="InterPro" id="IPR014729">
    <property type="entry name" value="Rossmann-like_a/b/a_fold"/>
</dbReference>
<dbReference type="NCBIfam" id="TIGR00467">
    <property type="entry name" value="lysS_arch"/>
    <property type="match status" value="1"/>
</dbReference>
<dbReference type="PANTHER" id="PTHR37940">
    <property type="entry name" value="LYSINE--TRNA LIGASE"/>
    <property type="match status" value="1"/>
</dbReference>
<dbReference type="PANTHER" id="PTHR37940:SF1">
    <property type="entry name" value="LYSINE--TRNA LIGASE"/>
    <property type="match status" value="1"/>
</dbReference>
<dbReference type="Pfam" id="PF01921">
    <property type="entry name" value="tRNA-synt_1f"/>
    <property type="match status" value="1"/>
</dbReference>
<dbReference type="SUPFAM" id="SSF48163">
    <property type="entry name" value="An anticodon-binding domain of class I aminoacyl-tRNA synthetases"/>
    <property type="match status" value="1"/>
</dbReference>
<dbReference type="SUPFAM" id="SSF52374">
    <property type="entry name" value="Nucleotidylyl transferase"/>
    <property type="match status" value="1"/>
</dbReference>
<dbReference type="PROSITE" id="PS00178">
    <property type="entry name" value="AA_TRNA_LIGASE_I"/>
    <property type="match status" value="1"/>
</dbReference>